<keyword id="KW-0020">Allergen</keyword>
<keyword id="KW-0049">Antioxidant</keyword>
<keyword id="KW-0903">Direct protein sequencing</keyword>
<keyword id="KW-1015">Disulfide bond</keyword>
<keyword id="KW-0560">Oxidoreductase</keyword>
<keyword id="KW-0575">Peroxidase</keyword>
<keyword id="KW-0676">Redox-active center</keyword>
<sequence>MSLKAGDSFPEGVTFSYIPWAEDASEITSCGIPINYNASKEFANKKVVLFALPGAFTPVCSANHVPEYIQKLPELRAKGVDQVAVLAYNDAYVMSAWGKANGVTGDDILFLSDPEAKFSKSIGWADEEGRTYRYVLVIDNGKIIYAAKEAAKNSLELSRADHVLKQL</sequence>
<feature type="chain" id="PRO_0000446340" description="Peroxiredoxin Pen c 3">
    <location>
        <begin position="1"/>
        <end position="167"/>
    </location>
</feature>
<feature type="domain" description="Thioredoxin" evidence="2">
    <location>
        <begin position="3"/>
        <end position="167"/>
    </location>
</feature>
<feature type="active site" description="Cysteine sulfenic acid (-SOH) intermediate" evidence="1">
    <location>
        <position position="60"/>
    </location>
</feature>
<feature type="disulfide bond" description="Interchain (with C-60); in linked form" evidence="1">
    <location>
        <position position="30"/>
    </location>
</feature>
<feature type="disulfide bond" description="Interchain (with C-30); in linked form" evidence="1">
    <location>
        <position position="60"/>
    </location>
</feature>
<reference evidence="6" key="1">
    <citation type="journal article" date="2000" name="J. Allergy Clin. Immunol.">
        <title>Complementary DNA cloning and immunologic characterization of a new Penicillium citrinum allergen (Pen c 3).</title>
        <authorList>
            <person name="Shen H.D."/>
            <person name="Wang C.W."/>
            <person name="Chou H."/>
            <person name="Lin W.L."/>
            <person name="Tam M.F."/>
            <person name="Huang M.H."/>
            <person name="Kuo M.L."/>
            <person name="Wang S.R."/>
            <person name="Han S.H."/>
        </authorList>
    </citation>
    <scope>NUCLEOTIDE SEQUENCE [MRNA]</scope>
    <scope>PROTEIN SEQUENCE OF 68-78</scope>
    <scope>ALLERGEN</scope>
    <source>
        <strain>52-5</strain>
    </source>
</reference>
<name>PRX5_PENCI</name>
<organism evidence="6">
    <name type="scientific">Penicillium citrinum</name>
    <dbReference type="NCBI Taxonomy" id="5077"/>
    <lineage>
        <taxon>Eukaryota</taxon>
        <taxon>Fungi</taxon>
        <taxon>Dikarya</taxon>
        <taxon>Ascomycota</taxon>
        <taxon>Pezizomycotina</taxon>
        <taxon>Eurotiomycetes</taxon>
        <taxon>Eurotiomycetidae</taxon>
        <taxon>Eurotiales</taxon>
        <taxon>Aspergillaceae</taxon>
        <taxon>Penicillium</taxon>
    </lineage>
</organism>
<comment type="function">
    <text evidence="1">Thiol-specific peroxidase that catalyzes the reduction of hydrogen peroxide and organic hydroperoxides to water and alcohols, respectively. Plays a role in cell protection against oxidative stress by detoxifying peroxides and as sensor of hydrogen peroxide-mediated signaling events.</text>
</comment>
<comment type="catalytic activity">
    <reaction evidence="1">
        <text>a hydroperoxide + [thioredoxin]-dithiol = an alcohol + [thioredoxin]-disulfide + H2O</text>
        <dbReference type="Rhea" id="RHEA:62620"/>
        <dbReference type="Rhea" id="RHEA-COMP:10698"/>
        <dbReference type="Rhea" id="RHEA-COMP:10700"/>
        <dbReference type="ChEBI" id="CHEBI:15377"/>
        <dbReference type="ChEBI" id="CHEBI:29950"/>
        <dbReference type="ChEBI" id="CHEBI:30879"/>
        <dbReference type="ChEBI" id="CHEBI:35924"/>
        <dbReference type="ChEBI" id="CHEBI:50058"/>
        <dbReference type="EC" id="1.11.1.24"/>
    </reaction>
</comment>
<comment type="subunit">
    <text evidence="1">Homodimer; disulfide-linked, upon oxidation.</text>
</comment>
<comment type="allergen">
    <text evidence="3">Causes an allergic reaction in human. Binds to IgE in 46% of 28 Penicillium-sensitized asthmatic patients from Taipei area.</text>
</comment>
<comment type="miscellaneous">
    <text evidence="1">The active site is a conserved redox-active cysteine residue, the peroxidatic cysteine (C(P)), which makes the nucleophilic attack on the peroxide substrate. The peroxide oxidizes the C(P)-SH to cysteine sulfenic acid (C(P)-SOH), which then reacts with another cysteine residue, the resolving cysteine (C(R)), to form a disulfide bridge. The disulfide is subsequently reduced by an appropriate electron donor to complete the catalytic cycle. In this typical 2-Cys Prx, C(R) is provided by the other dimeric subunit to form an intersubunit disulfide. The disulfide is subsequently reduced by thioredoxin.</text>
</comment>
<comment type="similarity">
    <text evidence="5">Belongs to the peroxiredoxin family. Prx5 subfamily.</text>
</comment>
<proteinExistence type="evidence at protein level"/>
<evidence type="ECO:0000250" key="1">
    <source>
        <dbReference type="UniProtKB" id="O43099"/>
    </source>
</evidence>
<evidence type="ECO:0000255" key="2">
    <source>
        <dbReference type="PROSITE-ProRule" id="PRU00691"/>
    </source>
</evidence>
<evidence type="ECO:0000269" key="3">
    <source>
    </source>
</evidence>
<evidence type="ECO:0000303" key="4">
    <source>
    </source>
</evidence>
<evidence type="ECO:0000305" key="5"/>
<evidence type="ECO:0000312" key="6">
    <source>
        <dbReference type="EMBL" id="AAD42074.1"/>
    </source>
</evidence>
<dbReference type="EC" id="1.11.1.24" evidence="1"/>
<dbReference type="EMBL" id="AF144753">
    <property type="protein sequence ID" value="AAD42074.1"/>
    <property type="molecule type" value="mRNA"/>
</dbReference>
<dbReference type="RefSeq" id="XP_056504899.1">
    <property type="nucleotide sequence ID" value="XM_056639142.1"/>
</dbReference>
<dbReference type="SMR" id="Q9Y8B8"/>
<dbReference type="Allergome" id="3405">
    <property type="allergen name" value="Pen c 3.0101"/>
</dbReference>
<dbReference type="Allergome" id="523">
    <property type="allergen name" value="Pen c 3"/>
</dbReference>
<dbReference type="GeneID" id="81378309"/>
<dbReference type="OrthoDB" id="195498at2759"/>
<dbReference type="GO" id="GO:0005739">
    <property type="term" value="C:mitochondrion"/>
    <property type="evidence" value="ECO:0007669"/>
    <property type="project" value="TreeGrafter"/>
</dbReference>
<dbReference type="GO" id="GO:0005777">
    <property type="term" value="C:peroxisome"/>
    <property type="evidence" value="ECO:0007669"/>
    <property type="project" value="TreeGrafter"/>
</dbReference>
<dbReference type="GO" id="GO:0042803">
    <property type="term" value="F:protein homodimerization activity"/>
    <property type="evidence" value="ECO:0000250"/>
    <property type="project" value="UniProtKB"/>
</dbReference>
<dbReference type="GO" id="GO:0008379">
    <property type="term" value="F:thioredoxin peroxidase activity"/>
    <property type="evidence" value="ECO:0000250"/>
    <property type="project" value="UniProtKB"/>
</dbReference>
<dbReference type="GO" id="GO:0045454">
    <property type="term" value="P:cell redox homeostasis"/>
    <property type="evidence" value="ECO:0000250"/>
    <property type="project" value="UniProtKB"/>
</dbReference>
<dbReference type="GO" id="GO:0034599">
    <property type="term" value="P:cellular response to oxidative stress"/>
    <property type="evidence" value="ECO:0000250"/>
    <property type="project" value="UniProtKB"/>
</dbReference>
<dbReference type="GO" id="GO:0042744">
    <property type="term" value="P:hydrogen peroxide catabolic process"/>
    <property type="evidence" value="ECO:0000250"/>
    <property type="project" value="UniProtKB"/>
</dbReference>
<dbReference type="CDD" id="cd03013">
    <property type="entry name" value="PRX5_like"/>
    <property type="match status" value="1"/>
</dbReference>
<dbReference type="FunFam" id="3.40.30.10:FF:000020">
    <property type="entry name" value="Peroxiredoxin"/>
    <property type="match status" value="1"/>
</dbReference>
<dbReference type="Gene3D" id="3.40.30.10">
    <property type="entry name" value="Glutaredoxin"/>
    <property type="match status" value="1"/>
</dbReference>
<dbReference type="InterPro" id="IPR037944">
    <property type="entry name" value="PRX5-like"/>
</dbReference>
<dbReference type="InterPro" id="IPR013740">
    <property type="entry name" value="Redoxin"/>
</dbReference>
<dbReference type="InterPro" id="IPR036249">
    <property type="entry name" value="Thioredoxin-like_sf"/>
</dbReference>
<dbReference type="InterPro" id="IPR013766">
    <property type="entry name" value="Thioredoxin_domain"/>
</dbReference>
<dbReference type="PANTHER" id="PTHR10430">
    <property type="entry name" value="PEROXIREDOXIN"/>
    <property type="match status" value="1"/>
</dbReference>
<dbReference type="PANTHER" id="PTHR10430:SF30">
    <property type="entry name" value="PEROXIREDOXIN PRXA-RELATED"/>
    <property type="match status" value="1"/>
</dbReference>
<dbReference type="Pfam" id="PF08534">
    <property type="entry name" value="Redoxin"/>
    <property type="match status" value="1"/>
</dbReference>
<dbReference type="SUPFAM" id="SSF52833">
    <property type="entry name" value="Thioredoxin-like"/>
    <property type="match status" value="1"/>
</dbReference>
<dbReference type="PROSITE" id="PS51352">
    <property type="entry name" value="THIOREDOXIN_2"/>
    <property type="match status" value="1"/>
</dbReference>
<protein>
    <recommendedName>
        <fullName evidence="5">Peroxiredoxin Pen c 3</fullName>
        <shortName evidence="5">Prx</shortName>
        <ecNumber evidence="1">1.11.1.24</ecNumber>
    </recommendedName>
    <alternativeName>
        <fullName evidence="4 6">Peroxisomal membrane protein</fullName>
    </alternativeName>
    <alternativeName>
        <fullName evidence="5">Thioredoxin peroxidase</fullName>
        <shortName evidence="5">TPx</shortName>
    </alternativeName>
    <alternativeName>
        <fullName evidence="5">Thioredoxin-dependent peroxiredoxin</fullName>
    </alternativeName>
    <allergenName evidence="4">Pen c 3</allergenName>
</protein>
<accession>Q9Y8B8</accession>